<gene>
    <name type="primary">rpoA</name>
    <name type="ordered locus">Z4665</name>
    <name type="ordered locus">ECs4160</name>
</gene>
<organism>
    <name type="scientific">Escherichia coli O157:H7</name>
    <dbReference type="NCBI Taxonomy" id="83334"/>
    <lineage>
        <taxon>Bacteria</taxon>
        <taxon>Pseudomonadati</taxon>
        <taxon>Pseudomonadota</taxon>
        <taxon>Gammaproteobacteria</taxon>
        <taxon>Enterobacterales</taxon>
        <taxon>Enterobacteriaceae</taxon>
        <taxon>Escherichia</taxon>
    </lineage>
</organism>
<dbReference type="EC" id="2.7.7.6"/>
<dbReference type="EMBL" id="AE005174">
    <property type="protein sequence ID" value="AAG58416.1"/>
    <property type="molecule type" value="Genomic_DNA"/>
</dbReference>
<dbReference type="EMBL" id="BA000007">
    <property type="protein sequence ID" value="BAB37583.1"/>
    <property type="molecule type" value="Genomic_DNA"/>
</dbReference>
<dbReference type="PIR" id="D85994">
    <property type="entry name" value="D85994"/>
</dbReference>
<dbReference type="PIR" id="H91148">
    <property type="entry name" value="H91148"/>
</dbReference>
<dbReference type="RefSeq" id="NP_312187.1">
    <property type="nucleotide sequence ID" value="NC_002695.1"/>
</dbReference>
<dbReference type="RefSeq" id="WP_001162094.1">
    <property type="nucleotide sequence ID" value="NZ_VOAI01000041.1"/>
</dbReference>
<dbReference type="PDB" id="5TBZ">
    <property type="method" value="X-ray"/>
    <property type="resolution" value="7.00 A"/>
    <property type="chains" value="A/B/F/G=1-235"/>
</dbReference>
<dbReference type="PDBsum" id="5TBZ"/>
<dbReference type="EMDB" id="EMD-20286"/>
<dbReference type="EMDB" id="EMD-20287"/>
<dbReference type="EMDB" id="EMD-20288"/>
<dbReference type="EMDB" id="EMD-20394"/>
<dbReference type="EMDB" id="EMD-20395"/>
<dbReference type="EMDB" id="EMD-22184"/>
<dbReference type="EMDB" id="EMD-22185"/>
<dbReference type="EMDB" id="EMD-22234"/>
<dbReference type="EMDB" id="EMD-22236"/>
<dbReference type="EMDB" id="EMD-22245"/>
<dbReference type="EMDB" id="EMD-22247"/>
<dbReference type="EMDB" id="EMD-22248"/>
<dbReference type="EMDB" id="EMD-22249"/>
<dbReference type="EMDB" id="EMD-28109"/>
<dbReference type="EMDB" id="EMD-28110"/>
<dbReference type="EMDB" id="EMD-28113"/>
<dbReference type="EMDB" id="EMD-28143"/>
<dbReference type="EMDB" id="EMD-28144"/>
<dbReference type="EMDB" id="EMD-28145"/>
<dbReference type="EMDB" id="EMD-28146"/>
<dbReference type="EMDB" id="EMD-28148"/>
<dbReference type="EMDB" id="EMD-47120"/>
<dbReference type="EMDB" id="EMD-7014"/>
<dbReference type="EMDB" id="EMD-7015"/>
<dbReference type="EMDB" id="EMD-7016"/>
<dbReference type="EMDB" id="EMD-7059"/>
<dbReference type="EMDB" id="EMD-8585"/>
<dbReference type="SMR" id="P0A7Z6"/>
<dbReference type="STRING" id="155864.Z4665"/>
<dbReference type="GeneID" id="915984"/>
<dbReference type="GeneID" id="93778692"/>
<dbReference type="KEGG" id="ece:Z4665"/>
<dbReference type="KEGG" id="ecs:ECs_4160"/>
<dbReference type="PATRIC" id="fig|386585.9.peg.4343"/>
<dbReference type="eggNOG" id="COG0202">
    <property type="taxonomic scope" value="Bacteria"/>
</dbReference>
<dbReference type="HOGENOM" id="CLU_053084_0_0_6"/>
<dbReference type="OMA" id="PIKNVKY"/>
<dbReference type="EvolutionaryTrace" id="P0A7Z6"/>
<dbReference type="Proteomes" id="UP000000558">
    <property type="component" value="Chromosome"/>
</dbReference>
<dbReference type="Proteomes" id="UP000002519">
    <property type="component" value="Chromosome"/>
</dbReference>
<dbReference type="GO" id="GO:0005737">
    <property type="term" value="C:cytoplasm"/>
    <property type="evidence" value="ECO:0007669"/>
    <property type="project" value="UniProtKB-ARBA"/>
</dbReference>
<dbReference type="GO" id="GO:0000428">
    <property type="term" value="C:DNA-directed RNA polymerase complex"/>
    <property type="evidence" value="ECO:0007669"/>
    <property type="project" value="UniProtKB-KW"/>
</dbReference>
<dbReference type="GO" id="GO:0003677">
    <property type="term" value="F:DNA binding"/>
    <property type="evidence" value="ECO:0007669"/>
    <property type="project" value="UniProtKB-UniRule"/>
</dbReference>
<dbReference type="GO" id="GO:0003899">
    <property type="term" value="F:DNA-directed RNA polymerase activity"/>
    <property type="evidence" value="ECO:0007669"/>
    <property type="project" value="UniProtKB-UniRule"/>
</dbReference>
<dbReference type="GO" id="GO:0046983">
    <property type="term" value="F:protein dimerization activity"/>
    <property type="evidence" value="ECO:0007669"/>
    <property type="project" value="InterPro"/>
</dbReference>
<dbReference type="GO" id="GO:0006351">
    <property type="term" value="P:DNA-templated transcription"/>
    <property type="evidence" value="ECO:0007669"/>
    <property type="project" value="UniProtKB-UniRule"/>
</dbReference>
<dbReference type="CDD" id="cd06928">
    <property type="entry name" value="RNAP_alpha_NTD"/>
    <property type="match status" value="1"/>
</dbReference>
<dbReference type="FunFam" id="1.10.150.20:FF:000001">
    <property type="entry name" value="DNA-directed RNA polymerase subunit alpha"/>
    <property type="match status" value="1"/>
</dbReference>
<dbReference type="FunFam" id="2.170.120.12:FF:000001">
    <property type="entry name" value="DNA-directed RNA polymerase subunit alpha"/>
    <property type="match status" value="1"/>
</dbReference>
<dbReference type="Gene3D" id="1.10.150.20">
    <property type="entry name" value="5' to 3' exonuclease, C-terminal subdomain"/>
    <property type="match status" value="1"/>
</dbReference>
<dbReference type="Gene3D" id="2.170.120.12">
    <property type="entry name" value="DNA-directed RNA polymerase, insert domain"/>
    <property type="match status" value="1"/>
</dbReference>
<dbReference type="Gene3D" id="3.30.1360.10">
    <property type="entry name" value="RNA polymerase, RBP11-like subunit"/>
    <property type="match status" value="1"/>
</dbReference>
<dbReference type="HAMAP" id="MF_00059">
    <property type="entry name" value="RNApol_bact_RpoA"/>
    <property type="match status" value="1"/>
</dbReference>
<dbReference type="InterPro" id="IPR011262">
    <property type="entry name" value="DNA-dir_RNA_pol_insert"/>
</dbReference>
<dbReference type="InterPro" id="IPR011263">
    <property type="entry name" value="DNA-dir_RNA_pol_RpoA/D/Rpb3"/>
</dbReference>
<dbReference type="InterPro" id="IPR011773">
    <property type="entry name" value="DNA-dir_RpoA"/>
</dbReference>
<dbReference type="InterPro" id="IPR036603">
    <property type="entry name" value="RBP11-like"/>
</dbReference>
<dbReference type="InterPro" id="IPR011260">
    <property type="entry name" value="RNAP_asu_C"/>
</dbReference>
<dbReference type="InterPro" id="IPR036643">
    <property type="entry name" value="RNApol_insert_sf"/>
</dbReference>
<dbReference type="NCBIfam" id="NF003513">
    <property type="entry name" value="PRK05182.1-2"/>
    <property type="match status" value="1"/>
</dbReference>
<dbReference type="NCBIfam" id="NF003519">
    <property type="entry name" value="PRK05182.2-5"/>
    <property type="match status" value="1"/>
</dbReference>
<dbReference type="NCBIfam" id="TIGR02027">
    <property type="entry name" value="rpoA"/>
    <property type="match status" value="1"/>
</dbReference>
<dbReference type="Pfam" id="PF01000">
    <property type="entry name" value="RNA_pol_A_bac"/>
    <property type="match status" value="1"/>
</dbReference>
<dbReference type="Pfam" id="PF03118">
    <property type="entry name" value="RNA_pol_A_CTD"/>
    <property type="match status" value="1"/>
</dbReference>
<dbReference type="Pfam" id="PF01193">
    <property type="entry name" value="RNA_pol_L"/>
    <property type="match status" value="1"/>
</dbReference>
<dbReference type="SMART" id="SM00662">
    <property type="entry name" value="RPOLD"/>
    <property type="match status" value="1"/>
</dbReference>
<dbReference type="SUPFAM" id="SSF47789">
    <property type="entry name" value="C-terminal domain of RNA polymerase alpha subunit"/>
    <property type="match status" value="1"/>
</dbReference>
<dbReference type="SUPFAM" id="SSF56553">
    <property type="entry name" value="Insert subdomain of RNA polymerase alpha subunit"/>
    <property type="match status" value="1"/>
</dbReference>
<dbReference type="SUPFAM" id="SSF55257">
    <property type="entry name" value="RBP11-like subunits of RNA polymerase"/>
    <property type="match status" value="1"/>
</dbReference>
<comment type="function">
    <text evidence="1">DNA-dependent RNA polymerase catalyzes the transcription of DNA into RNA using the four ribonucleoside triphosphates as substrates.</text>
</comment>
<comment type="catalytic activity">
    <reaction>
        <text>RNA(n) + a ribonucleoside 5'-triphosphate = RNA(n+1) + diphosphate</text>
        <dbReference type="Rhea" id="RHEA:21248"/>
        <dbReference type="Rhea" id="RHEA-COMP:14527"/>
        <dbReference type="Rhea" id="RHEA-COMP:17342"/>
        <dbReference type="ChEBI" id="CHEBI:33019"/>
        <dbReference type="ChEBI" id="CHEBI:61557"/>
        <dbReference type="ChEBI" id="CHEBI:140395"/>
        <dbReference type="EC" id="2.7.7.6"/>
    </reaction>
</comment>
<comment type="subunit">
    <text evidence="1">Homodimer. The RNAP catalytic core consists of 2 alpha, 1 beta, 1 beta' and 1 omega subunit. When a sigma factor is associated with the core the holoenzyme is formed, which can initiate transcription (By similarity).</text>
</comment>
<comment type="domain">
    <text evidence="1">The N-terminal domain is essential for RNAP assembly and basal transcription, whereas the C-terminal domain is involved in interaction with transcriptional regulators and with upstream promoter elements.</text>
</comment>
<comment type="similarity">
    <text evidence="2">Belongs to the RNA polymerase alpha chain family.</text>
</comment>
<keyword id="KW-0002">3D-structure</keyword>
<keyword id="KW-0240">DNA-directed RNA polymerase</keyword>
<keyword id="KW-0548">Nucleotidyltransferase</keyword>
<keyword id="KW-1185">Reference proteome</keyword>
<keyword id="KW-0804">Transcription</keyword>
<keyword id="KW-0808">Transferase</keyword>
<sequence>MQGSVTEFLKPRLVDIEQVSSTHAKVTLEPLERGFGHTLGNALRRILLSSMPGCAVTEVEIDGVLHEYSTKEGVQEDILEILLNLKGLAVRVQGKDEVILTLNKSGIGPVTAADITHDGDVEIVKPQHVICHLTDENASISMRIKVQRGRGYVPASTRIHSEEDERPIGRLLVDACYSPVERIAYNVEAARVEQRTDLDKLVIEMETNGTIDPEEAIRRAATILAEQLEAFVDLRDVRQPEVKEEKPEFDPILLRPVDDLELTVRSANCLKAEAIHYIGDLVQRTEVELLKTPNLGKKSLTEIKDVLASRGLSLGMRLENWPPASIADE</sequence>
<feature type="chain" id="PRO_0000175306" description="DNA-directed RNA polymerase subunit alpha">
    <location>
        <begin position="1"/>
        <end position="329"/>
    </location>
</feature>
<feature type="region of interest" description="Alpha N-terminal domain (alpha-NTD)" evidence="1">
    <location>
        <begin position="1"/>
        <end position="235"/>
    </location>
</feature>
<feature type="region of interest" description="Alpha C-terminal domain (alpha-CTD)" evidence="1">
    <location>
        <begin position="249"/>
        <end position="329"/>
    </location>
</feature>
<reference key="1">
    <citation type="journal article" date="2001" name="Nature">
        <title>Genome sequence of enterohaemorrhagic Escherichia coli O157:H7.</title>
        <authorList>
            <person name="Perna N.T."/>
            <person name="Plunkett G. III"/>
            <person name="Burland V."/>
            <person name="Mau B."/>
            <person name="Glasner J.D."/>
            <person name="Rose D.J."/>
            <person name="Mayhew G.F."/>
            <person name="Evans P.S."/>
            <person name="Gregor J."/>
            <person name="Kirkpatrick H.A."/>
            <person name="Posfai G."/>
            <person name="Hackett J."/>
            <person name="Klink S."/>
            <person name="Boutin A."/>
            <person name="Shao Y."/>
            <person name="Miller L."/>
            <person name="Grotbeck E.J."/>
            <person name="Davis N.W."/>
            <person name="Lim A."/>
            <person name="Dimalanta E.T."/>
            <person name="Potamousis K."/>
            <person name="Apodaca J."/>
            <person name="Anantharaman T.S."/>
            <person name="Lin J."/>
            <person name="Yen G."/>
            <person name="Schwartz D.C."/>
            <person name="Welch R.A."/>
            <person name="Blattner F.R."/>
        </authorList>
    </citation>
    <scope>NUCLEOTIDE SEQUENCE [LARGE SCALE GENOMIC DNA]</scope>
    <source>
        <strain>O157:H7 / EDL933 / ATCC 700927 / EHEC</strain>
    </source>
</reference>
<reference key="2">
    <citation type="journal article" date="2001" name="DNA Res.">
        <title>Complete genome sequence of enterohemorrhagic Escherichia coli O157:H7 and genomic comparison with a laboratory strain K-12.</title>
        <authorList>
            <person name="Hayashi T."/>
            <person name="Makino K."/>
            <person name="Ohnishi M."/>
            <person name="Kurokawa K."/>
            <person name="Ishii K."/>
            <person name="Yokoyama K."/>
            <person name="Han C.-G."/>
            <person name="Ohtsubo E."/>
            <person name="Nakayama K."/>
            <person name="Murata T."/>
            <person name="Tanaka M."/>
            <person name="Tobe T."/>
            <person name="Iida T."/>
            <person name="Takami H."/>
            <person name="Honda T."/>
            <person name="Sasakawa C."/>
            <person name="Ogasawara N."/>
            <person name="Yasunaga T."/>
            <person name="Kuhara S."/>
            <person name="Shiba T."/>
            <person name="Hattori M."/>
            <person name="Shinagawa H."/>
        </authorList>
    </citation>
    <scope>NUCLEOTIDE SEQUENCE [LARGE SCALE GENOMIC DNA]</scope>
    <source>
        <strain>O157:H7 / Sakai / RIMD 0509952 / EHEC</strain>
    </source>
</reference>
<evidence type="ECO:0000250" key="1"/>
<evidence type="ECO:0000305" key="2"/>
<accession>P0A7Z6</accession>
<accession>P00574</accession>
<name>RPOA_ECO57</name>
<proteinExistence type="evidence at protein level"/>
<protein>
    <recommendedName>
        <fullName>DNA-directed RNA polymerase subunit alpha</fullName>
        <shortName>RNAP subunit alpha</shortName>
        <ecNumber>2.7.7.6</ecNumber>
    </recommendedName>
    <alternativeName>
        <fullName>RNA polymerase subunit alpha</fullName>
    </alternativeName>
    <alternativeName>
        <fullName>Transcriptase subunit alpha</fullName>
    </alternativeName>
</protein>